<dbReference type="EC" id="5.3.1.1" evidence="1"/>
<dbReference type="EMBL" id="CP001164">
    <property type="protein sequence ID" value="ACI39522.1"/>
    <property type="molecule type" value="Genomic_DNA"/>
</dbReference>
<dbReference type="RefSeq" id="WP_001216325.1">
    <property type="nucleotide sequence ID" value="NC_011353.1"/>
</dbReference>
<dbReference type="SMR" id="B5YZ57"/>
<dbReference type="GeneID" id="93777979"/>
<dbReference type="KEGG" id="ecf:ECH74115_5374"/>
<dbReference type="HOGENOM" id="CLU_024251_2_1_6"/>
<dbReference type="UniPathway" id="UPA00109">
    <property type="reaction ID" value="UER00189"/>
</dbReference>
<dbReference type="UniPathway" id="UPA00138"/>
<dbReference type="GO" id="GO:0005829">
    <property type="term" value="C:cytosol"/>
    <property type="evidence" value="ECO:0007669"/>
    <property type="project" value="TreeGrafter"/>
</dbReference>
<dbReference type="GO" id="GO:0004807">
    <property type="term" value="F:triose-phosphate isomerase activity"/>
    <property type="evidence" value="ECO:0007669"/>
    <property type="project" value="UniProtKB-UniRule"/>
</dbReference>
<dbReference type="GO" id="GO:0006094">
    <property type="term" value="P:gluconeogenesis"/>
    <property type="evidence" value="ECO:0007669"/>
    <property type="project" value="UniProtKB-UniRule"/>
</dbReference>
<dbReference type="GO" id="GO:0046166">
    <property type="term" value="P:glyceraldehyde-3-phosphate biosynthetic process"/>
    <property type="evidence" value="ECO:0007669"/>
    <property type="project" value="TreeGrafter"/>
</dbReference>
<dbReference type="GO" id="GO:0019563">
    <property type="term" value="P:glycerol catabolic process"/>
    <property type="evidence" value="ECO:0007669"/>
    <property type="project" value="TreeGrafter"/>
</dbReference>
<dbReference type="GO" id="GO:0006096">
    <property type="term" value="P:glycolytic process"/>
    <property type="evidence" value="ECO:0007669"/>
    <property type="project" value="UniProtKB-UniRule"/>
</dbReference>
<dbReference type="CDD" id="cd00311">
    <property type="entry name" value="TIM"/>
    <property type="match status" value="1"/>
</dbReference>
<dbReference type="FunFam" id="3.20.20.70:FF:000020">
    <property type="entry name" value="Triosephosphate isomerase"/>
    <property type="match status" value="1"/>
</dbReference>
<dbReference type="Gene3D" id="3.20.20.70">
    <property type="entry name" value="Aldolase class I"/>
    <property type="match status" value="1"/>
</dbReference>
<dbReference type="HAMAP" id="MF_00147_B">
    <property type="entry name" value="TIM_B"/>
    <property type="match status" value="1"/>
</dbReference>
<dbReference type="InterPro" id="IPR013785">
    <property type="entry name" value="Aldolase_TIM"/>
</dbReference>
<dbReference type="InterPro" id="IPR035990">
    <property type="entry name" value="TIM_sf"/>
</dbReference>
<dbReference type="InterPro" id="IPR022896">
    <property type="entry name" value="TrioseP_Isoase_bac/euk"/>
</dbReference>
<dbReference type="InterPro" id="IPR000652">
    <property type="entry name" value="Triosephosphate_isomerase"/>
</dbReference>
<dbReference type="InterPro" id="IPR020861">
    <property type="entry name" value="Triosephosphate_isomerase_AS"/>
</dbReference>
<dbReference type="NCBIfam" id="TIGR00419">
    <property type="entry name" value="tim"/>
    <property type="match status" value="1"/>
</dbReference>
<dbReference type="PANTHER" id="PTHR21139">
    <property type="entry name" value="TRIOSEPHOSPHATE ISOMERASE"/>
    <property type="match status" value="1"/>
</dbReference>
<dbReference type="PANTHER" id="PTHR21139:SF42">
    <property type="entry name" value="TRIOSEPHOSPHATE ISOMERASE"/>
    <property type="match status" value="1"/>
</dbReference>
<dbReference type="Pfam" id="PF00121">
    <property type="entry name" value="TIM"/>
    <property type="match status" value="1"/>
</dbReference>
<dbReference type="SUPFAM" id="SSF51351">
    <property type="entry name" value="Triosephosphate isomerase (TIM)"/>
    <property type="match status" value="1"/>
</dbReference>
<dbReference type="PROSITE" id="PS00171">
    <property type="entry name" value="TIM_1"/>
    <property type="match status" value="1"/>
</dbReference>
<dbReference type="PROSITE" id="PS51440">
    <property type="entry name" value="TIM_2"/>
    <property type="match status" value="1"/>
</dbReference>
<comment type="function">
    <text evidence="1">Involved in the gluconeogenesis. Catalyzes stereospecifically the conversion of dihydroxyacetone phosphate (DHAP) to D-glyceraldehyde-3-phosphate (G3P).</text>
</comment>
<comment type="catalytic activity">
    <reaction evidence="1">
        <text>D-glyceraldehyde 3-phosphate = dihydroxyacetone phosphate</text>
        <dbReference type="Rhea" id="RHEA:18585"/>
        <dbReference type="ChEBI" id="CHEBI:57642"/>
        <dbReference type="ChEBI" id="CHEBI:59776"/>
        <dbReference type="EC" id="5.3.1.1"/>
    </reaction>
</comment>
<comment type="pathway">
    <text evidence="1">Carbohydrate biosynthesis; gluconeogenesis.</text>
</comment>
<comment type="pathway">
    <text evidence="1">Carbohydrate degradation; glycolysis; D-glyceraldehyde 3-phosphate from glycerone phosphate: step 1/1.</text>
</comment>
<comment type="subunit">
    <text evidence="1">Homodimer.</text>
</comment>
<comment type="subcellular location">
    <subcellularLocation>
        <location evidence="1">Cytoplasm</location>
    </subcellularLocation>
</comment>
<comment type="similarity">
    <text evidence="1">Belongs to the triosephosphate isomerase family.</text>
</comment>
<keyword id="KW-0963">Cytoplasm</keyword>
<keyword id="KW-0312">Gluconeogenesis</keyword>
<keyword id="KW-0324">Glycolysis</keyword>
<keyword id="KW-0413">Isomerase</keyword>
<evidence type="ECO:0000255" key="1">
    <source>
        <dbReference type="HAMAP-Rule" id="MF_00147"/>
    </source>
</evidence>
<gene>
    <name evidence="1" type="primary">tpiA</name>
    <name type="ordered locus">ECH74115_5374</name>
</gene>
<feature type="chain" id="PRO_1000096494" description="Triosephosphate isomerase">
    <location>
        <begin position="1"/>
        <end position="255"/>
    </location>
</feature>
<feature type="active site" description="Electrophile" evidence="1">
    <location>
        <position position="95"/>
    </location>
</feature>
<feature type="active site" description="Proton acceptor" evidence="1">
    <location>
        <position position="167"/>
    </location>
</feature>
<feature type="binding site" evidence="1">
    <location>
        <begin position="9"/>
        <end position="11"/>
    </location>
    <ligand>
        <name>substrate</name>
    </ligand>
</feature>
<feature type="binding site" evidence="1">
    <location>
        <position position="173"/>
    </location>
    <ligand>
        <name>substrate</name>
    </ligand>
</feature>
<feature type="binding site" evidence="1">
    <location>
        <position position="212"/>
    </location>
    <ligand>
        <name>substrate</name>
    </ligand>
</feature>
<feature type="binding site" evidence="1">
    <location>
        <begin position="233"/>
        <end position="234"/>
    </location>
    <ligand>
        <name>substrate</name>
    </ligand>
</feature>
<reference key="1">
    <citation type="journal article" date="2011" name="Proc. Natl. Acad. Sci. U.S.A.">
        <title>Genomic anatomy of Escherichia coli O157:H7 outbreaks.</title>
        <authorList>
            <person name="Eppinger M."/>
            <person name="Mammel M.K."/>
            <person name="Leclerc J.E."/>
            <person name="Ravel J."/>
            <person name="Cebula T.A."/>
        </authorList>
    </citation>
    <scope>NUCLEOTIDE SEQUENCE [LARGE SCALE GENOMIC DNA]</scope>
    <source>
        <strain>EC4115 / EHEC</strain>
    </source>
</reference>
<name>TPIS_ECO5E</name>
<accession>B5YZ57</accession>
<sequence length="255" mass="26972">MRHPLVMGNWKLNGSRHMVHELVSNLRKELAGVAGCAVAIAPPEMYIDMAKREAEGSHIMLGAQNVDLNLSGAFTGETSAAMLKDIGAQYIIIGHSERRTYHKESDELIAKKFAVLKEQGLTPVLCIGETEAENEAGKTEEVCARQIDAVLKTQGAAAFEGAVIAYEPVWAIGTGKSATPAQAQAVHKFIRDHIAKVDANIAEQVIIQYGGSVNASNAAELFAQPDIDGALVGGASLKADAFAVIVKAAEAAKQA</sequence>
<organism>
    <name type="scientific">Escherichia coli O157:H7 (strain EC4115 / EHEC)</name>
    <dbReference type="NCBI Taxonomy" id="444450"/>
    <lineage>
        <taxon>Bacteria</taxon>
        <taxon>Pseudomonadati</taxon>
        <taxon>Pseudomonadota</taxon>
        <taxon>Gammaproteobacteria</taxon>
        <taxon>Enterobacterales</taxon>
        <taxon>Enterobacteriaceae</taxon>
        <taxon>Escherichia</taxon>
    </lineage>
</organism>
<proteinExistence type="inferred from homology"/>
<protein>
    <recommendedName>
        <fullName evidence="1">Triosephosphate isomerase</fullName>
        <shortName evidence="1">TIM</shortName>
        <shortName evidence="1">TPI</shortName>
        <ecNumber evidence="1">5.3.1.1</ecNumber>
    </recommendedName>
    <alternativeName>
        <fullName evidence="1">Triose-phosphate isomerase</fullName>
    </alternativeName>
</protein>